<keyword id="KW-0150">Chloroplast</keyword>
<keyword id="KW-0934">Plastid</keyword>
<keyword id="KW-0687">Ribonucleoprotein</keyword>
<keyword id="KW-0689">Ribosomal protein</keyword>
<keyword id="KW-0694">RNA-binding</keyword>
<keyword id="KW-0699">rRNA-binding</keyword>
<sequence>MIQPQSYLNVADNSGARKLMCIRVLGGGRQTATIGDVIIAVVKDALPNMPLKKSDVVRAVIVRTSKGVRRENGMMLCFDDNAAVVINKEGNPRGTRVFGPIARELRDRNFTKIVSLAPEVV</sequence>
<comment type="function">
    <text evidence="1">Binds to 23S rRNA.</text>
</comment>
<comment type="subunit">
    <text evidence="1">Part of the 50S ribosomal subunit.</text>
</comment>
<comment type="subcellular location">
    <subcellularLocation>
        <location>Plastid</location>
        <location>Chloroplast</location>
    </subcellularLocation>
</comment>
<comment type="similarity">
    <text evidence="1">Belongs to the universal ribosomal protein uL14 family.</text>
</comment>
<name>RK14_TETOB</name>
<protein>
    <recommendedName>
        <fullName evidence="1">Large ribosomal subunit protein uL14c</fullName>
    </recommendedName>
    <alternativeName>
        <fullName evidence="2">50S ribosomal protein L14, chloroplastic</fullName>
    </alternativeName>
</protein>
<feature type="chain" id="PRO_0000266598" description="Large ribosomal subunit protein uL14c">
    <location>
        <begin position="1"/>
        <end position="121"/>
    </location>
</feature>
<evidence type="ECO:0000255" key="1">
    <source>
        <dbReference type="HAMAP-Rule" id="MF_01367"/>
    </source>
</evidence>
<evidence type="ECO:0000305" key="2"/>
<dbReference type="EMBL" id="DQ396875">
    <property type="protein sequence ID" value="ABD48296.1"/>
    <property type="molecule type" value="Genomic_DNA"/>
</dbReference>
<dbReference type="RefSeq" id="YP_636013.1">
    <property type="nucleotide sequence ID" value="NC_008101.1"/>
</dbReference>
<dbReference type="SMR" id="Q1KVR1"/>
<dbReference type="GeneID" id="4099846"/>
<dbReference type="GO" id="GO:0009507">
    <property type="term" value="C:chloroplast"/>
    <property type="evidence" value="ECO:0007669"/>
    <property type="project" value="UniProtKB-SubCell"/>
</dbReference>
<dbReference type="GO" id="GO:0022625">
    <property type="term" value="C:cytosolic large ribosomal subunit"/>
    <property type="evidence" value="ECO:0007669"/>
    <property type="project" value="TreeGrafter"/>
</dbReference>
<dbReference type="GO" id="GO:0070180">
    <property type="term" value="F:large ribosomal subunit rRNA binding"/>
    <property type="evidence" value="ECO:0007669"/>
    <property type="project" value="TreeGrafter"/>
</dbReference>
<dbReference type="GO" id="GO:0003735">
    <property type="term" value="F:structural constituent of ribosome"/>
    <property type="evidence" value="ECO:0007669"/>
    <property type="project" value="InterPro"/>
</dbReference>
<dbReference type="GO" id="GO:0006412">
    <property type="term" value="P:translation"/>
    <property type="evidence" value="ECO:0007669"/>
    <property type="project" value="UniProtKB-UniRule"/>
</dbReference>
<dbReference type="CDD" id="cd00337">
    <property type="entry name" value="Ribosomal_uL14"/>
    <property type="match status" value="1"/>
</dbReference>
<dbReference type="FunFam" id="2.40.150.20:FF:000001">
    <property type="entry name" value="50S ribosomal protein L14"/>
    <property type="match status" value="1"/>
</dbReference>
<dbReference type="Gene3D" id="2.40.150.20">
    <property type="entry name" value="Ribosomal protein L14"/>
    <property type="match status" value="1"/>
</dbReference>
<dbReference type="HAMAP" id="MF_01367">
    <property type="entry name" value="Ribosomal_uL14"/>
    <property type="match status" value="1"/>
</dbReference>
<dbReference type="InterPro" id="IPR000218">
    <property type="entry name" value="Ribosomal_uL14"/>
</dbReference>
<dbReference type="InterPro" id="IPR005745">
    <property type="entry name" value="Ribosomal_uL14_bac-type"/>
</dbReference>
<dbReference type="InterPro" id="IPR019972">
    <property type="entry name" value="Ribosomal_uL14_CS"/>
</dbReference>
<dbReference type="InterPro" id="IPR036853">
    <property type="entry name" value="Ribosomal_uL14_sf"/>
</dbReference>
<dbReference type="NCBIfam" id="TIGR01067">
    <property type="entry name" value="rplN_bact"/>
    <property type="match status" value="1"/>
</dbReference>
<dbReference type="PANTHER" id="PTHR11761">
    <property type="entry name" value="50S/60S RIBOSOMAL PROTEIN L14/L23"/>
    <property type="match status" value="1"/>
</dbReference>
<dbReference type="PANTHER" id="PTHR11761:SF3">
    <property type="entry name" value="LARGE RIBOSOMAL SUBUNIT PROTEIN UL14M"/>
    <property type="match status" value="1"/>
</dbReference>
<dbReference type="Pfam" id="PF00238">
    <property type="entry name" value="Ribosomal_L14"/>
    <property type="match status" value="1"/>
</dbReference>
<dbReference type="SMART" id="SM01374">
    <property type="entry name" value="Ribosomal_L14"/>
    <property type="match status" value="1"/>
</dbReference>
<dbReference type="SUPFAM" id="SSF50193">
    <property type="entry name" value="Ribosomal protein L14"/>
    <property type="match status" value="1"/>
</dbReference>
<dbReference type="PROSITE" id="PS00049">
    <property type="entry name" value="RIBOSOMAL_L14"/>
    <property type="match status" value="1"/>
</dbReference>
<organism>
    <name type="scientific">Tetradesmus obliquus</name>
    <name type="common">Green alga</name>
    <name type="synonym">Acutodesmus obliquus</name>
    <dbReference type="NCBI Taxonomy" id="3088"/>
    <lineage>
        <taxon>Eukaryota</taxon>
        <taxon>Viridiplantae</taxon>
        <taxon>Chlorophyta</taxon>
        <taxon>core chlorophytes</taxon>
        <taxon>Chlorophyceae</taxon>
        <taxon>CS clade</taxon>
        <taxon>Sphaeropleales</taxon>
        <taxon>Scenedesmaceae</taxon>
        <taxon>Tetradesmus</taxon>
    </lineage>
</organism>
<geneLocation type="chloroplast"/>
<accession>Q1KVR1</accession>
<proteinExistence type="inferred from homology"/>
<reference key="1">
    <citation type="journal article" date="2006" name="BMC Evol. Biol.">
        <title>The complete chloroplast genome sequence of the chlorophycean green alga Scenedesmus obliquus reveals a compact gene organization and a biased distribution of genes on the two DNA strands.</title>
        <authorList>
            <person name="de Cambiaire J.-C."/>
            <person name="Otis C."/>
            <person name="Lemieux C."/>
            <person name="Turmel M."/>
        </authorList>
    </citation>
    <scope>NUCLEOTIDE SEQUENCE [LARGE SCALE GENOMIC DNA]</scope>
    <source>
        <strain>UTEX 393</strain>
    </source>
</reference>
<gene>
    <name evidence="1" type="primary">rpl14</name>
</gene>